<organism>
    <name type="scientific">Xanthomonas campestris pv. campestris (strain 8004)</name>
    <dbReference type="NCBI Taxonomy" id="314565"/>
    <lineage>
        <taxon>Bacteria</taxon>
        <taxon>Pseudomonadati</taxon>
        <taxon>Pseudomonadota</taxon>
        <taxon>Gammaproteobacteria</taxon>
        <taxon>Lysobacterales</taxon>
        <taxon>Lysobacteraceae</taxon>
        <taxon>Xanthomonas</taxon>
    </lineage>
</organism>
<proteinExistence type="inferred from homology"/>
<accession>Q4UTV2</accession>
<keyword id="KW-0378">Hydrolase</keyword>
<dbReference type="EC" id="3.5.4.16" evidence="1"/>
<dbReference type="EMBL" id="CP000050">
    <property type="protein sequence ID" value="AAY49521.1"/>
    <property type="molecule type" value="Genomic_DNA"/>
</dbReference>
<dbReference type="RefSeq" id="WP_011036938.1">
    <property type="nucleotide sequence ID" value="NZ_CP155948.1"/>
</dbReference>
<dbReference type="SMR" id="Q4UTV2"/>
<dbReference type="KEGG" id="xcb:XC_2471"/>
<dbReference type="HOGENOM" id="CLU_062816_0_0_6"/>
<dbReference type="UniPathway" id="UPA00848">
    <property type="reaction ID" value="UER00151"/>
</dbReference>
<dbReference type="Proteomes" id="UP000000420">
    <property type="component" value="Chromosome"/>
</dbReference>
<dbReference type="GO" id="GO:0003934">
    <property type="term" value="F:GTP cyclohydrolase I activity"/>
    <property type="evidence" value="ECO:0007669"/>
    <property type="project" value="UniProtKB-UniRule"/>
</dbReference>
<dbReference type="GO" id="GO:0046654">
    <property type="term" value="P:tetrahydrofolate biosynthetic process"/>
    <property type="evidence" value="ECO:0007669"/>
    <property type="project" value="UniProtKB-UniRule"/>
</dbReference>
<dbReference type="Gene3D" id="3.10.270.10">
    <property type="entry name" value="Urate Oxidase"/>
    <property type="match status" value="1"/>
</dbReference>
<dbReference type="HAMAP" id="MF_01527_B">
    <property type="entry name" value="GTP_cyclohydrol_B"/>
    <property type="match status" value="1"/>
</dbReference>
<dbReference type="InterPro" id="IPR022838">
    <property type="entry name" value="GTP_cyclohydrolase_FolE2"/>
</dbReference>
<dbReference type="InterPro" id="IPR003801">
    <property type="entry name" value="GTP_cyclohydrolase_FolE2/MptA"/>
</dbReference>
<dbReference type="NCBIfam" id="NF010200">
    <property type="entry name" value="PRK13674.1-1"/>
    <property type="match status" value="1"/>
</dbReference>
<dbReference type="PANTHER" id="PTHR36445">
    <property type="entry name" value="GTP CYCLOHYDROLASE MPTA"/>
    <property type="match status" value="1"/>
</dbReference>
<dbReference type="PANTHER" id="PTHR36445:SF1">
    <property type="entry name" value="GTP CYCLOHYDROLASE MPTA"/>
    <property type="match status" value="1"/>
</dbReference>
<dbReference type="Pfam" id="PF02649">
    <property type="entry name" value="GCHY-1"/>
    <property type="match status" value="1"/>
</dbReference>
<gene>
    <name evidence="1" type="primary">folE2</name>
    <name type="ordered locus">XC_2471</name>
</gene>
<protein>
    <recommendedName>
        <fullName evidence="1">GTP cyclohydrolase FolE2</fullName>
        <ecNumber evidence="1">3.5.4.16</ecNumber>
    </recommendedName>
</protein>
<feature type="chain" id="PRO_0000289531" description="GTP cyclohydrolase FolE2">
    <location>
        <begin position="1"/>
        <end position="311"/>
    </location>
</feature>
<feature type="site" description="May be catalytically important" evidence="1">
    <location>
        <position position="155"/>
    </location>
</feature>
<comment type="function">
    <text evidence="1">Converts GTP to 7,8-dihydroneopterin triphosphate.</text>
</comment>
<comment type="catalytic activity">
    <reaction evidence="1">
        <text>GTP + H2O = 7,8-dihydroneopterin 3'-triphosphate + formate + H(+)</text>
        <dbReference type="Rhea" id="RHEA:17473"/>
        <dbReference type="ChEBI" id="CHEBI:15377"/>
        <dbReference type="ChEBI" id="CHEBI:15378"/>
        <dbReference type="ChEBI" id="CHEBI:15740"/>
        <dbReference type="ChEBI" id="CHEBI:37565"/>
        <dbReference type="ChEBI" id="CHEBI:58462"/>
        <dbReference type="EC" id="3.5.4.16"/>
    </reaction>
</comment>
<comment type="pathway">
    <text evidence="1">Cofactor biosynthesis; 7,8-dihydroneopterin triphosphate biosynthesis; 7,8-dihydroneopterin triphosphate from GTP: step 1/1.</text>
</comment>
<comment type="similarity">
    <text evidence="1">Belongs to the GTP cyclohydrolase IV family.</text>
</comment>
<name>GCH4_XANC8</name>
<evidence type="ECO:0000255" key="1">
    <source>
        <dbReference type="HAMAP-Rule" id="MF_01527"/>
    </source>
</evidence>
<reference key="1">
    <citation type="journal article" date="2005" name="Genome Res.">
        <title>Comparative and functional genomic analyses of the pathogenicity of phytopathogen Xanthomonas campestris pv. campestris.</title>
        <authorList>
            <person name="Qian W."/>
            <person name="Jia Y."/>
            <person name="Ren S.-X."/>
            <person name="He Y.-Q."/>
            <person name="Feng J.-X."/>
            <person name="Lu L.-F."/>
            <person name="Sun Q."/>
            <person name="Ying G."/>
            <person name="Tang D.-J."/>
            <person name="Tang H."/>
            <person name="Wu W."/>
            <person name="Hao P."/>
            <person name="Wang L."/>
            <person name="Jiang B.-L."/>
            <person name="Zeng S."/>
            <person name="Gu W.-Y."/>
            <person name="Lu G."/>
            <person name="Rong L."/>
            <person name="Tian Y."/>
            <person name="Yao Z."/>
            <person name="Fu G."/>
            <person name="Chen B."/>
            <person name="Fang R."/>
            <person name="Qiang B."/>
            <person name="Chen Z."/>
            <person name="Zhao G.-P."/>
            <person name="Tang J.-L."/>
            <person name="He C."/>
        </authorList>
    </citation>
    <scope>NUCLEOTIDE SEQUENCE [LARGE SCALE GENOMIC DNA]</scope>
    <source>
        <strain>8004</strain>
    </source>
</reference>
<sequence length="311" mass="34352">MSTTLPDIAVTEPSALHAPLRWVGMQDIAIPVRLDEAEPSGTVAARAQVQVDLPRPELKGIHMSRLYRLLDRHLEQPLSPAMLSQLLQAMIDSHADCGSRAARVSLAFEVMLRMPALRSEGLAGWRAYPVRIDAQSRAGRSEMRLQIDVLYASTCPCSAALSRQLLSKAFAQQHAGQTALRVEDVAQWLQRNGSYATPHSQRSVAQVRVDLVARVQSFDIRALVLLCESALATPVQAAVRRIDEQAFARLNGANLMYVEDAARRLRKELAERYASFHVAVRHFESLHAHDAVAETGSDADVFHMIAESHGQ</sequence>